<gene>
    <name evidence="1" type="primary">dapA</name>
    <name type="ordered locus">syc2247_d</name>
</gene>
<evidence type="ECO:0000255" key="1">
    <source>
        <dbReference type="HAMAP-Rule" id="MF_00418"/>
    </source>
</evidence>
<evidence type="ECO:0000305" key="2"/>
<feature type="chain" id="PRO_0000103172" description="4-hydroxy-tetrahydrodipicolinate synthase">
    <location>
        <begin position="1"/>
        <end position="299"/>
    </location>
</feature>
<feature type="active site" description="Proton donor/acceptor" evidence="1">
    <location>
        <position position="139"/>
    </location>
</feature>
<feature type="active site" description="Schiff-base intermediate with substrate" evidence="1">
    <location>
        <position position="167"/>
    </location>
</feature>
<feature type="binding site" evidence="1">
    <location>
        <position position="50"/>
    </location>
    <ligand>
        <name>pyruvate</name>
        <dbReference type="ChEBI" id="CHEBI:15361"/>
    </ligand>
</feature>
<feature type="binding site" evidence="1">
    <location>
        <position position="209"/>
    </location>
    <ligand>
        <name>pyruvate</name>
        <dbReference type="ChEBI" id="CHEBI:15361"/>
    </ligand>
</feature>
<feature type="site" description="Part of a proton relay during catalysis" evidence="1">
    <location>
        <position position="49"/>
    </location>
</feature>
<feature type="site" description="Part of a proton relay during catalysis" evidence="1">
    <location>
        <position position="112"/>
    </location>
</feature>
<protein>
    <recommendedName>
        <fullName evidence="1">4-hydroxy-tetrahydrodipicolinate synthase</fullName>
        <shortName evidence="1">HTPA synthase</shortName>
        <ecNumber evidence="1">4.3.3.7</ecNumber>
    </recommendedName>
</protein>
<sequence>MPQPYPFGRVITAMITPFNAEGQVAYDIAQSLAVHLVEQGSDGLVICGTTGESPTLTWEEELQLFRAVKEAVGDRAAVIAGTGSNCTREAIAATQSAATLGLNGSLQVVPYYNKPPQEGLYAHFRAIAEACPDLPLMLYNIPGRTGQSLQPETVARLASLPNVVAIKAASGNVEEVSALRQLLPDSFAIYSGDDSLTLPMLAVGAQGVVSVASHLVGPQLQALIQAFEAGNVARAQQLHHQLYPLFKALFLTTNPIPVRAAMELLGWSIGLPRLPLVPASAEIRQALASCLTELGLYTA</sequence>
<proteinExistence type="inferred from homology"/>
<organism>
    <name type="scientific">Synechococcus sp. (strain ATCC 27144 / PCC 6301 / SAUG 1402/1)</name>
    <name type="common">Anacystis nidulans</name>
    <dbReference type="NCBI Taxonomy" id="269084"/>
    <lineage>
        <taxon>Bacteria</taxon>
        <taxon>Bacillati</taxon>
        <taxon>Cyanobacteriota</taxon>
        <taxon>Cyanophyceae</taxon>
        <taxon>Synechococcales</taxon>
        <taxon>Synechococcaceae</taxon>
        <taxon>Synechococcus</taxon>
    </lineage>
</organism>
<name>DAPA_SYNP6</name>
<keyword id="KW-0028">Amino-acid biosynthesis</keyword>
<keyword id="KW-0963">Cytoplasm</keyword>
<keyword id="KW-0220">Diaminopimelate biosynthesis</keyword>
<keyword id="KW-0456">Lyase</keyword>
<keyword id="KW-0457">Lysine biosynthesis</keyword>
<keyword id="KW-0704">Schiff base</keyword>
<accession>Q5MZT3</accession>
<comment type="function">
    <text evidence="1">Catalyzes the condensation of (S)-aspartate-beta-semialdehyde [(S)-ASA] and pyruvate to 4-hydroxy-tetrahydrodipicolinate (HTPA).</text>
</comment>
<comment type="catalytic activity">
    <reaction evidence="1">
        <text>L-aspartate 4-semialdehyde + pyruvate = (2S,4S)-4-hydroxy-2,3,4,5-tetrahydrodipicolinate + H2O + H(+)</text>
        <dbReference type="Rhea" id="RHEA:34171"/>
        <dbReference type="ChEBI" id="CHEBI:15361"/>
        <dbReference type="ChEBI" id="CHEBI:15377"/>
        <dbReference type="ChEBI" id="CHEBI:15378"/>
        <dbReference type="ChEBI" id="CHEBI:67139"/>
        <dbReference type="ChEBI" id="CHEBI:537519"/>
        <dbReference type="EC" id="4.3.3.7"/>
    </reaction>
</comment>
<comment type="pathway">
    <text evidence="1">Amino-acid biosynthesis; L-lysine biosynthesis via DAP pathway; (S)-tetrahydrodipicolinate from L-aspartate: step 3/4.</text>
</comment>
<comment type="subunit">
    <text evidence="1">Homotetramer; dimer of dimers.</text>
</comment>
<comment type="subcellular location">
    <subcellularLocation>
        <location evidence="1">Cytoplasm</location>
    </subcellularLocation>
</comment>
<comment type="similarity">
    <text evidence="1">Belongs to the DapA family.</text>
</comment>
<comment type="caution">
    <text evidence="2">Was originally thought to be a dihydrodipicolinate synthase (DHDPS), catalyzing the condensation of (S)-aspartate-beta-semialdehyde [(S)-ASA] and pyruvate to dihydrodipicolinate (DHDP). However, it was shown in E.coli that the product of the enzymatic reaction is not dihydrodipicolinate but in fact (4S)-4-hydroxy-2,3,4,5-tetrahydro-(2S)-dipicolinic acid (HTPA), and that the consecutive dehydration reaction leading to DHDP is not spontaneous but catalyzed by DapB.</text>
</comment>
<dbReference type="EC" id="4.3.3.7" evidence="1"/>
<dbReference type="EMBL" id="AP008231">
    <property type="protein sequence ID" value="BAD80437.1"/>
    <property type="molecule type" value="Genomic_DNA"/>
</dbReference>
<dbReference type="RefSeq" id="WP_011244557.1">
    <property type="nucleotide sequence ID" value="NZ_CP085785.1"/>
</dbReference>
<dbReference type="SMR" id="Q5MZT3"/>
<dbReference type="GeneID" id="72430718"/>
<dbReference type="KEGG" id="syc:syc2247_d"/>
<dbReference type="eggNOG" id="COG0329">
    <property type="taxonomic scope" value="Bacteria"/>
</dbReference>
<dbReference type="UniPathway" id="UPA00034">
    <property type="reaction ID" value="UER00017"/>
</dbReference>
<dbReference type="Proteomes" id="UP000001175">
    <property type="component" value="Chromosome"/>
</dbReference>
<dbReference type="GO" id="GO:0005829">
    <property type="term" value="C:cytosol"/>
    <property type="evidence" value="ECO:0007669"/>
    <property type="project" value="TreeGrafter"/>
</dbReference>
<dbReference type="GO" id="GO:0008840">
    <property type="term" value="F:4-hydroxy-tetrahydrodipicolinate synthase activity"/>
    <property type="evidence" value="ECO:0007669"/>
    <property type="project" value="UniProtKB-UniRule"/>
</dbReference>
<dbReference type="GO" id="GO:0019877">
    <property type="term" value="P:diaminopimelate biosynthetic process"/>
    <property type="evidence" value="ECO:0007669"/>
    <property type="project" value="UniProtKB-UniRule"/>
</dbReference>
<dbReference type="GO" id="GO:0009089">
    <property type="term" value="P:lysine biosynthetic process via diaminopimelate"/>
    <property type="evidence" value="ECO:0007669"/>
    <property type="project" value="UniProtKB-UniRule"/>
</dbReference>
<dbReference type="CDD" id="cd00950">
    <property type="entry name" value="DHDPS"/>
    <property type="match status" value="1"/>
</dbReference>
<dbReference type="Gene3D" id="3.20.20.70">
    <property type="entry name" value="Aldolase class I"/>
    <property type="match status" value="1"/>
</dbReference>
<dbReference type="HAMAP" id="MF_00418">
    <property type="entry name" value="DapA"/>
    <property type="match status" value="1"/>
</dbReference>
<dbReference type="InterPro" id="IPR013785">
    <property type="entry name" value="Aldolase_TIM"/>
</dbReference>
<dbReference type="InterPro" id="IPR005263">
    <property type="entry name" value="DapA"/>
</dbReference>
<dbReference type="InterPro" id="IPR002220">
    <property type="entry name" value="DapA-like"/>
</dbReference>
<dbReference type="InterPro" id="IPR020625">
    <property type="entry name" value="Schiff_base-form_aldolases_AS"/>
</dbReference>
<dbReference type="InterPro" id="IPR020624">
    <property type="entry name" value="Schiff_base-form_aldolases_CS"/>
</dbReference>
<dbReference type="NCBIfam" id="TIGR00674">
    <property type="entry name" value="dapA"/>
    <property type="match status" value="1"/>
</dbReference>
<dbReference type="PANTHER" id="PTHR12128:SF66">
    <property type="entry name" value="4-HYDROXY-2-OXOGLUTARATE ALDOLASE, MITOCHONDRIAL"/>
    <property type="match status" value="1"/>
</dbReference>
<dbReference type="PANTHER" id="PTHR12128">
    <property type="entry name" value="DIHYDRODIPICOLINATE SYNTHASE"/>
    <property type="match status" value="1"/>
</dbReference>
<dbReference type="Pfam" id="PF00701">
    <property type="entry name" value="DHDPS"/>
    <property type="match status" value="1"/>
</dbReference>
<dbReference type="PIRSF" id="PIRSF001365">
    <property type="entry name" value="DHDPS"/>
    <property type="match status" value="1"/>
</dbReference>
<dbReference type="PRINTS" id="PR00146">
    <property type="entry name" value="DHPICSNTHASE"/>
</dbReference>
<dbReference type="SMART" id="SM01130">
    <property type="entry name" value="DHDPS"/>
    <property type="match status" value="1"/>
</dbReference>
<dbReference type="SUPFAM" id="SSF51569">
    <property type="entry name" value="Aldolase"/>
    <property type="match status" value="1"/>
</dbReference>
<dbReference type="PROSITE" id="PS00665">
    <property type="entry name" value="DHDPS_1"/>
    <property type="match status" value="1"/>
</dbReference>
<dbReference type="PROSITE" id="PS00666">
    <property type="entry name" value="DHDPS_2"/>
    <property type="match status" value="1"/>
</dbReference>
<reference key="1">
    <citation type="journal article" date="2007" name="Photosyn. Res.">
        <title>Complete nucleotide sequence of the freshwater unicellular cyanobacterium Synechococcus elongatus PCC 6301 chromosome: gene content and organization.</title>
        <authorList>
            <person name="Sugita C."/>
            <person name="Ogata K."/>
            <person name="Shikata M."/>
            <person name="Jikuya H."/>
            <person name="Takano J."/>
            <person name="Furumichi M."/>
            <person name="Kanehisa M."/>
            <person name="Omata T."/>
            <person name="Sugiura M."/>
            <person name="Sugita M."/>
        </authorList>
    </citation>
    <scope>NUCLEOTIDE SEQUENCE [LARGE SCALE GENOMIC DNA]</scope>
    <source>
        <strain>ATCC 27144 / PCC 6301 / SAUG 1402/1</strain>
    </source>
</reference>